<dbReference type="EMBL" id="BX284602">
    <property type="protein sequence ID" value="CCD62046.1"/>
    <property type="molecule type" value="Genomic_DNA"/>
</dbReference>
<dbReference type="PIR" id="T34224">
    <property type="entry name" value="T34224"/>
</dbReference>
<dbReference type="RefSeq" id="NP_495613.1">
    <property type="nucleotide sequence ID" value="NM_063212.9"/>
</dbReference>
<dbReference type="ComplexPortal" id="CPX-4306">
    <property type="entry name" value="PETISCO, pid-1 variant"/>
</dbReference>
<dbReference type="FunCoup" id="Q19541">
    <property type="interactions" value="1382"/>
</dbReference>
<dbReference type="IntAct" id="Q19541">
    <property type="interactions" value="11"/>
</dbReference>
<dbReference type="STRING" id="6239.F18A1.8.1"/>
<dbReference type="PaxDb" id="6239-F18A1.8"/>
<dbReference type="PeptideAtlas" id="Q19541"/>
<dbReference type="EnsemblMetazoa" id="F18A1.8.1">
    <property type="protein sequence ID" value="F18A1.8.1"/>
    <property type="gene ID" value="WBGene00017549"/>
</dbReference>
<dbReference type="GeneID" id="184627"/>
<dbReference type="KEGG" id="cel:CELE_F18A1.8"/>
<dbReference type="UCSC" id="F18A1.8">
    <property type="organism name" value="c. elegans"/>
</dbReference>
<dbReference type="AGR" id="WB:WBGene00017549"/>
<dbReference type="CTD" id="184627"/>
<dbReference type="WormBase" id="F18A1.8">
    <property type="protein sequence ID" value="CE04408"/>
    <property type="gene ID" value="WBGene00017549"/>
    <property type="gene designation" value="pid-1"/>
</dbReference>
<dbReference type="eggNOG" id="ENOG502THJI">
    <property type="taxonomic scope" value="Eukaryota"/>
</dbReference>
<dbReference type="HOGENOM" id="CLU_1579909_0_0_1"/>
<dbReference type="InParanoid" id="Q19541"/>
<dbReference type="OMA" id="HREFSHI"/>
<dbReference type="OrthoDB" id="5779350at2759"/>
<dbReference type="PRO" id="PR:Q19541"/>
<dbReference type="Proteomes" id="UP000001940">
    <property type="component" value="Chromosome II"/>
</dbReference>
<dbReference type="Bgee" id="WBGene00017549">
    <property type="expression patterns" value="Expressed in germ line (C elegans) and 4 other cell types or tissues"/>
</dbReference>
<dbReference type="GO" id="GO:0005737">
    <property type="term" value="C:cytoplasm"/>
    <property type="evidence" value="ECO:0000314"/>
    <property type="project" value="UniProtKB"/>
</dbReference>
<dbReference type="GO" id="GO:0005634">
    <property type="term" value="C:nucleus"/>
    <property type="evidence" value="ECO:0000314"/>
    <property type="project" value="WormBase"/>
</dbReference>
<dbReference type="GO" id="GO:0048471">
    <property type="term" value="C:perinuclear region of cytoplasm"/>
    <property type="evidence" value="ECO:0000314"/>
    <property type="project" value="UniProtKB"/>
</dbReference>
<dbReference type="GO" id="GO:0034518">
    <property type="term" value="C:RNA cap binding complex"/>
    <property type="evidence" value="ECO:0000353"/>
    <property type="project" value="ComplexPortal"/>
</dbReference>
<dbReference type="GO" id="GO:0034585">
    <property type="term" value="P:21U-RNA metabolic process"/>
    <property type="evidence" value="ECO:0000303"/>
    <property type="project" value="ComplexPortal"/>
</dbReference>
<dbReference type="GO" id="GO:0034587">
    <property type="term" value="P:piRNA processing"/>
    <property type="evidence" value="ECO:0000315"/>
    <property type="project" value="ComplexPortal"/>
</dbReference>
<reference evidence="10" key="1">
    <citation type="journal article" date="1998" name="Science">
        <title>Genome sequence of the nematode C. elegans: a platform for investigating biology.</title>
        <authorList>
            <consortium name="The C. elegans sequencing consortium"/>
        </authorList>
    </citation>
    <scope>NUCLEOTIDE SEQUENCE [LARGE SCALE GENOMIC DNA]</scope>
    <source>
        <strain evidence="10">Bristol N2</strain>
    </source>
</reference>
<reference evidence="6" key="2">
    <citation type="journal article" date="2014" name="Genes Dev.">
        <title>PID-1 is a novel factor that operates during 21U-RNA biogenesis in Caenorhabditis elegans.</title>
        <authorList>
            <person name="de Albuquerque B.F."/>
            <person name="Luteijn M.J."/>
            <person name="Cordeiro Rodrigues R.J."/>
            <person name="van Bergeijk P."/>
            <person name="Waaijers S."/>
            <person name="Kaaij L.J."/>
            <person name="Klein H."/>
            <person name="Boxem M."/>
            <person name="Ketting R.F."/>
        </authorList>
    </citation>
    <scope>FUNCTION</scope>
    <scope>SUBCELLULAR LOCATION</scope>
    <scope>TISSUE SPECIFICITY</scope>
    <scope>MUTAGENESIS OF ARG-61</scope>
</reference>
<reference key="3">
    <citation type="journal article" date="2019" name="Cell Rep.">
        <title>Functional Proteomics Identifies a PICS Complex Required for piRNA Maturation and Chromosome Segregation.</title>
        <authorList>
            <person name="Zeng C."/>
            <person name="Weng C."/>
            <person name="Wang X."/>
            <person name="Yan Y.H."/>
            <person name="Li W.J."/>
            <person name="Xu D."/>
            <person name="Hong M."/>
            <person name="Liao S."/>
            <person name="Dong M.Q."/>
            <person name="Feng X."/>
            <person name="Xu C."/>
            <person name="Guang S."/>
        </authorList>
    </citation>
    <scope>FUNCTION</scope>
    <scope>IDENTIFICATION IN THE PETISCO COMPLEX</scope>
    <scope>INTERACTION WITH ERH-2; PID-3 AND TOFU-6</scope>
    <scope>SUBCELLULAR LOCATION</scope>
    <scope>TISSUE SPECIFICITY</scope>
    <scope>DISRUPTION PHENOTYPE</scope>
</reference>
<reference key="4">
    <citation type="journal article" date="2019" name="Genes Dev.">
        <title>PETISCO is a novel protein complex required for 21U RNA biogenesis and embryonic viability.</title>
        <authorList>
            <person name="Cordeiro Rodrigues R.J."/>
            <person name="de Jesus Domingues A.M."/>
            <person name="Hellmann S."/>
            <person name="Dietz S."/>
            <person name="de Albuquerque B.F.M."/>
            <person name="Renz C."/>
            <person name="Ulrich H.D."/>
            <person name="Sarkies P."/>
            <person name="Butter F."/>
            <person name="Ketting R.F."/>
        </authorList>
    </citation>
    <scope>FUNCTION</scope>
    <scope>IDENTIFICATION IN THE PETISCO COMPLEX</scope>
    <scope>INTERACTION WITH ERH-2 AND PID-3</scope>
    <scope>SUBCELLULAR LOCATION</scope>
    <scope>TISSUE SPECIFICITY</scope>
    <scope>DEVELOPMENTAL STAGE</scope>
    <scope>DISRUPTION PHENOTYPE</scope>
    <scope>MUTAGENESIS OF ARG-61</scope>
</reference>
<reference key="5">
    <citation type="journal article" date="2021" name="EMBO J.">
        <title>Intrinsically disordered protein PID-2 modulates Z granules and is required for heritable piRNA-induced silencing in the Caenorhabditis elegans embryo.</title>
        <authorList>
            <person name="Placentino M."/>
            <person name="de Jesus Domingues A.M."/>
            <person name="Schreier J."/>
            <person name="Dietz S."/>
            <person name="Hellmann S."/>
            <person name="de Albuquerque B.F."/>
            <person name="Butter F."/>
            <person name="Ketting R.F."/>
        </authorList>
    </citation>
    <scope>FUNCTION</scope>
</reference>
<feature type="chain" id="PRO_0000432405" description="Protein pid-1">
    <location>
        <begin position="1"/>
        <end position="169"/>
    </location>
</feature>
<feature type="region of interest" description="Disordered" evidence="1">
    <location>
        <begin position="137"/>
        <end position="169"/>
    </location>
</feature>
<feature type="compositionally biased region" description="Polar residues" evidence="1">
    <location>
        <begin position="137"/>
        <end position="151"/>
    </location>
</feature>
<feature type="site" description="May be required for interaction with erh-2" evidence="8">
    <location>
        <position position="61"/>
    </location>
</feature>
<feature type="mutagenesis site" description="In xf14; abolishes the interaction with pid-3. May abolish the interaction with erh-2. Reduces stability and reduces levels of a class of 21 nucleotide PIWI-interacting RNAs (piRNAs) that possess a uracil residue at the 5'-end (also called 21U-RNAs)." evidence="2 3">
    <original>R</original>
    <variation>C</variation>
    <location>
        <position position="61"/>
    </location>
</feature>
<comment type="function">
    <text evidence="2 3 5 9">Component of the pid-1 variant of the PETISCO complex which is required for the biogenesis of a class of 21 nucleotide PIWI-interacting RNAs (piRNAs) that possess a uracil residue at the 5'-end (also called 21U-RNAs) (PubMed:31147388, PubMed:31216475). Within the complex acts as an adapter which binds to the complex via erh-2 (PubMed:31147388). Involved in the biogenesis of 21U-RNAs which guide the piwi protein prg-1 to its DNA targets for silencing (PubMed:24696453, PubMed:33231880). Plays a role in small RNA-directed transgenerational epigenetic inheritance (PubMed:33231880).</text>
</comment>
<comment type="subunit">
    <text evidence="3 4 9">Component of the pid-1 variant of the PETISCO complex (also called the pid-3, erh-2, tofu-6, and ife-3 small RNA complex) containing at least pid-1, tofu-6, ife-3, pid-3, and erh-2, which is required for the biogenesis of a class of 21 nucleotide PIWI-interacting RNAs (piRNAs) that possess a uracil residue at the 5'-end (also called 21U-RNAs) (PubMed:31147388, PubMed:31216475). Within the complex interacts with pid-3; the interaction is direct (PubMed:31147388, PubMed:31216475). Within the complex interacts with erh-2 (PubMed:31147388, PubMed:31216475). Within the complex interacts with tofu-6 (PubMed:31216475).</text>
</comment>
<comment type="interaction">
    <interactant intactId="EBI-21447100">
        <id>Q19541</id>
    </interactant>
    <interactant intactId="EBI-21447087">
        <id>Q20057</id>
        <label>erh-2</label>
    </interactant>
    <organismsDiffer>false</organismsDiffer>
    <experiments>4</experiments>
</comment>
<comment type="interaction">
    <interactant intactId="EBI-21447100">
        <id>Q19541</id>
    </interactant>
    <interactant intactId="EBI-2415582">
        <id>O76616</id>
        <label>pid-3</label>
    </interactant>
    <organismsDiffer>false</organismsDiffer>
    <experiments>4</experiments>
</comment>
<comment type="subcellular location">
    <subcellularLocation>
        <location evidence="2 3 4">Cytoplasm</location>
    </subcellularLocation>
    <subcellularLocation>
        <location evidence="2">Nucleus</location>
    </subcellularLocation>
    <subcellularLocation>
        <location evidence="3 4">Cytoplasm</location>
        <location evidence="3 4">Perinuclear region</location>
    </subcellularLocation>
    <text evidence="2 3 4">Expressed predominantly in the cytoplasm (PubMed:24696453). A small fraction is nuclear or located near the nucleus (PubMed:24696453). Dispersedly distributes throughout the cytoplasm in early embryos (PubMed:31147388). Localizes to puncta in the perinuclear region in the germline syncytium (PubMed:31147388, PubMed:31216475).</text>
</comment>
<comment type="tissue specificity">
    <text evidence="2 3 4">Expressed predominantly in the germline (at protein level).</text>
</comment>
<comment type="developmental stage">
    <text evidence="3">Expressed from early embryogenesis (at protein level).</text>
</comment>
<comment type="disruption phenotype">
    <text evidence="3 4">RNAi-mediated knockdown results in defective activity of the PIWI-interacting RNA (piRNA) silencing pathway (PubMed:31147388). RNAi-mediated knockdown disrupts the localization of tofu-6 to the perinuclear region of the germline (PubMed:31216475). RNAi-mediated knockdown does not cause chromosome segregation and cell division defects in early embryos (PubMed:31216475).</text>
</comment>
<proteinExistence type="evidence at protein level"/>
<organism evidence="10">
    <name type="scientific">Caenorhabditis elegans</name>
    <dbReference type="NCBI Taxonomy" id="6239"/>
    <lineage>
        <taxon>Eukaryota</taxon>
        <taxon>Metazoa</taxon>
        <taxon>Ecdysozoa</taxon>
        <taxon>Nematoda</taxon>
        <taxon>Chromadorea</taxon>
        <taxon>Rhabditida</taxon>
        <taxon>Rhabditina</taxon>
        <taxon>Rhabditomorpha</taxon>
        <taxon>Rhabditoidea</taxon>
        <taxon>Rhabditidae</taxon>
        <taxon>Peloderinae</taxon>
        <taxon>Caenorhabditis</taxon>
    </lineage>
</organism>
<accession>Q19541</accession>
<name>PID1_CAEEL</name>
<evidence type="ECO:0000256" key="1">
    <source>
        <dbReference type="SAM" id="MobiDB-lite"/>
    </source>
</evidence>
<evidence type="ECO:0000269" key="2">
    <source>
    </source>
</evidence>
<evidence type="ECO:0000269" key="3">
    <source>
    </source>
</evidence>
<evidence type="ECO:0000269" key="4">
    <source>
    </source>
</evidence>
<evidence type="ECO:0000269" key="5">
    <source>
    </source>
</evidence>
<evidence type="ECO:0000305" key="6"/>
<evidence type="ECO:0000305" key="7">
    <source>
    </source>
</evidence>
<evidence type="ECO:0000305" key="8">
    <source>
    </source>
</evidence>
<evidence type="ECO:0000305" key="9">
    <source>
    </source>
</evidence>
<evidence type="ECO:0000312" key="10">
    <source>
        <dbReference type="Proteomes" id="UP000001940"/>
    </source>
</evidence>
<evidence type="ECO:0000312" key="11">
    <source>
        <dbReference type="WormBase" id="F18A1.8"/>
    </source>
</evidence>
<gene>
    <name evidence="11" type="primary">pid-1</name>
    <name evidence="11" type="ORF">F18A1.8</name>
</gene>
<keyword id="KW-0963">Cytoplasm</keyword>
<keyword id="KW-0539">Nucleus</keyword>
<keyword id="KW-1185">Reference proteome</keyword>
<keyword id="KW-0943">RNA-mediated gene silencing</keyword>
<sequence>MSAKREFSHITLASTPFKKRIDQNSLKTDSDIEKDTNIAHKCAERFNYNTNLHRKVTLSDRFELAALGYEMKAKPRTIIEKHNDCDEFHFIYRKEKKNDYGTGSPLSAGLSLSNPLPAGRGFLSPAIQNTSNQFTFSGSPRITPQKHTPVSANHKPARSIFDDIPSNIA</sequence>
<protein>
    <recommendedName>
        <fullName evidence="7">Protein pid-1</fullName>
    </recommendedName>
    <alternativeName>
        <fullName evidence="11">PiRNA-induced silencing defective protein 1</fullName>
    </alternativeName>
</protein>